<sequence length="402" mass="43860">MRFIDEAIVTVKAGDGGNGIVSFRREKYVPRGGPDGGDGGKGGDVFVVADDNTNTLVDYRYTRRYDAGRGENGHSKNCSGKGADNIYLRVPIGTTIVNNETGEVIGDLTEIGQELLIAKGGDGGLGNTHFKSSTNQAPRKATSGFEGELKELKFELKVVADVGLIGLPNAGKSTFIRQVSSAKPKVADYPFTTLVPNLGVVDVGVHRSFVMADIPGLIEGASEGAGLGIRFLKHVARTRRLLHILDIKPIDGSDPVENGRVILNELERFSPELANLPQILILNKIDQVPDADELNELCLHIVAELGWTGAVFRTSTLTGAGVDDVKYHLMNEIEREQEREEEDPMFAQAQKERFERLEAEVRLNTEEQKEAYRAARRAAREAAFNNELDDDDDDGVEVVYAP</sequence>
<reference key="1">
    <citation type="submission" date="2007-05" db="EMBL/GenBank/DDBJ databases">
        <title>Complete sequence of chromosome of Psychrobacter sp. PRwf-1.</title>
        <authorList>
            <consortium name="US DOE Joint Genome Institute"/>
            <person name="Copeland A."/>
            <person name="Lucas S."/>
            <person name="Lapidus A."/>
            <person name="Barry K."/>
            <person name="Detter J.C."/>
            <person name="Glavina del Rio T."/>
            <person name="Hammon N."/>
            <person name="Israni S."/>
            <person name="Dalin E."/>
            <person name="Tice H."/>
            <person name="Pitluck S."/>
            <person name="Chain P."/>
            <person name="Malfatti S."/>
            <person name="Shin M."/>
            <person name="Vergez L."/>
            <person name="Schmutz J."/>
            <person name="Larimer F."/>
            <person name="Land M."/>
            <person name="Hauser L."/>
            <person name="Kyrpides N."/>
            <person name="Kim E."/>
            <person name="Tiedje J."/>
            <person name="Richardson P."/>
        </authorList>
    </citation>
    <scope>NUCLEOTIDE SEQUENCE [LARGE SCALE GENOMIC DNA]</scope>
    <source>
        <strain>PRwf-1</strain>
    </source>
</reference>
<keyword id="KW-0963">Cytoplasm</keyword>
<keyword id="KW-0342">GTP-binding</keyword>
<keyword id="KW-0378">Hydrolase</keyword>
<keyword id="KW-0460">Magnesium</keyword>
<keyword id="KW-0479">Metal-binding</keyword>
<keyword id="KW-0547">Nucleotide-binding</keyword>
<feature type="chain" id="PRO_0000386167" description="GTPase Obg">
    <location>
        <begin position="1"/>
        <end position="402"/>
    </location>
</feature>
<feature type="domain" description="Obg" evidence="2">
    <location>
        <begin position="1"/>
        <end position="159"/>
    </location>
</feature>
<feature type="domain" description="OBG-type G" evidence="1">
    <location>
        <begin position="160"/>
        <end position="334"/>
    </location>
</feature>
<feature type="region of interest" description="Disordered" evidence="3">
    <location>
        <begin position="382"/>
        <end position="402"/>
    </location>
</feature>
<feature type="compositionally biased region" description="Acidic residues" evidence="3">
    <location>
        <begin position="387"/>
        <end position="396"/>
    </location>
</feature>
<feature type="binding site" evidence="1">
    <location>
        <begin position="166"/>
        <end position="173"/>
    </location>
    <ligand>
        <name>GTP</name>
        <dbReference type="ChEBI" id="CHEBI:37565"/>
    </ligand>
</feature>
<feature type="binding site" evidence="1">
    <location>
        <position position="173"/>
    </location>
    <ligand>
        <name>Mg(2+)</name>
        <dbReference type="ChEBI" id="CHEBI:18420"/>
    </ligand>
</feature>
<feature type="binding site" evidence="1">
    <location>
        <begin position="191"/>
        <end position="195"/>
    </location>
    <ligand>
        <name>GTP</name>
        <dbReference type="ChEBI" id="CHEBI:37565"/>
    </ligand>
</feature>
<feature type="binding site" evidence="1">
    <location>
        <position position="193"/>
    </location>
    <ligand>
        <name>Mg(2+)</name>
        <dbReference type="ChEBI" id="CHEBI:18420"/>
    </ligand>
</feature>
<feature type="binding site" evidence="1">
    <location>
        <begin position="213"/>
        <end position="216"/>
    </location>
    <ligand>
        <name>GTP</name>
        <dbReference type="ChEBI" id="CHEBI:37565"/>
    </ligand>
</feature>
<feature type="binding site" evidence="1">
    <location>
        <begin position="283"/>
        <end position="286"/>
    </location>
    <ligand>
        <name>GTP</name>
        <dbReference type="ChEBI" id="CHEBI:37565"/>
    </ligand>
</feature>
<feature type="binding site" evidence="1">
    <location>
        <begin position="315"/>
        <end position="317"/>
    </location>
    <ligand>
        <name>GTP</name>
        <dbReference type="ChEBI" id="CHEBI:37565"/>
    </ligand>
</feature>
<evidence type="ECO:0000255" key="1">
    <source>
        <dbReference type="HAMAP-Rule" id="MF_01454"/>
    </source>
</evidence>
<evidence type="ECO:0000255" key="2">
    <source>
        <dbReference type="PROSITE-ProRule" id="PRU01231"/>
    </source>
</evidence>
<evidence type="ECO:0000256" key="3">
    <source>
        <dbReference type="SAM" id="MobiDB-lite"/>
    </source>
</evidence>
<protein>
    <recommendedName>
        <fullName evidence="1">GTPase Obg</fullName>
        <ecNumber evidence="1">3.6.5.-</ecNumber>
    </recommendedName>
    <alternativeName>
        <fullName evidence="1">GTP-binding protein Obg</fullName>
    </alternativeName>
</protein>
<name>OBG_PSYWF</name>
<organism>
    <name type="scientific">Psychrobacter sp. (strain PRwf-1)</name>
    <dbReference type="NCBI Taxonomy" id="349106"/>
    <lineage>
        <taxon>Bacteria</taxon>
        <taxon>Pseudomonadati</taxon>
        <taxon>Pseudomonadota</taxon>
        <taxon>Gammaproteobacteria</taxon>
        <taxon>Moraxellales</taxon>
        <taxon>Moraxellaceae</taxon>
        <taxon>Psychrobacter</taxon>
    </lineage>
</organism>
<proteinExistence type="inferred from homology"/>
<comment type="function">
    <text evidence="1">An essential GTPase which binds GTP, GDP and possibly (p)ppGpp with moderate affinity, with high nucleotide exchange rates and a fairly low GTP hydrolysis rate. Plays a role in control of the cell cycle, stress response, ribosome biogenesis and in those bacteria that undergo differentiation, in morphogenesis control.</text>
</comment>
<comment type="cofactor">
    <cofactor evidence="1">
        <name>Mg(2+)</name>
        <dbReference type="ChEBI" id="CHEBI:18420"/>
    </cofactor>
</comment>
<comment type="subunit">
    <text evidence="1">Monomer.</text>
</comment>
<comment type="subcellular location">
    <subcellularLocation>
        <location evidence="1">Cytoplasm</location>
    </subcellularLocation>
</comment>
<comment type="similarity">
    <text evidence="1">Belongs to the TRAFAC class OBG-HflX-like GTPase superfamily. OBG GTPase family.</text>
</comment>
<accession>A5WFV1</accession>
<gene>
    <name evidence="1" type="primary">obg</name>
    <name type="ordered locus">PsycPRwf_1601</name>
</gene>
<dbReference type="EC" id="3.6.5.-" evidence="1"/>
<dbReference type="EMBL" id="CP000713">
    <property type="protein sequence ID" value="ABQ94542.1"/>
    <property type="molecule type" value="Genomic_DNA"/>
</dbReference>
<dbReference type="SMR" id="A5WFV1"/>
<dbReference type="STRING" id="349106.PsycPRwf_1601"/>
<dbReference type="KEGG" id="prw:PsycPRwf_1601"/>
<dbReference type="eggNOG" id="COG0536">
    <property type="taxonomic scope" value="Bacteria"/>
</dbReference>
<dbReference type="HOGENOM" id="CLU_011747_2_0_6"/>
<dbReference type="GO" id="GO:0005737">
    <property type="term" value="C:cytoplasm"/>
    <property type="evidence" value="ECO:0007669"/>
    <property type="project" value="UniProtKB-SubCell"/>
</dbReference>
<dbReference type="GO" id="GO:0005525">
    <property type="term" value="F:GTP binding"/>
    <property type="evidence" value="ECO:0007669"/>
    <property type="project" value="UniProtKB-UniRule"/>
</dbReference>
<dbReference type="GO" id="GO:0003924">
    <property type="term" value="F:GTPase activity"/>
    <property type="evidence" value="ECO:0007669"/>
    <property type="project" value="UniProtKB-UniRule"/>
</dbReference>
<dbReference type="GO" id="GO:0000287">
    <property type="term" value="F:magnesium ion binding"/>
    <property type="evidence" value="ECO:0007669"/>
    <property type="project" value="InterPro"/>
</dbReference>
<dbReference type="GO" id="GO:0042254">
    <property type="term" value="P:ribosome biogenesis"/>
    <property type="evidence" value="ECO:0007669"/>
    <property type="project" value="UniProtKB-UniRule"/>
</dbReference>
<dbReference type="CDD" id="cd01898">
    <property type="entry name" value="Obg"/>
    <property type="match status" value="1"/>
</dbReference>
<dbReference type="FunFam" id="2.70.210.12:FF:000001">
    <property type="entry name" value="GTPase Obg"/>
    <property type="match status" value="1"/>
</dbReference>
<dbReference type="Gene3D" id="2.70.210.12">
    <property type="entry name" value="GTP1/OBG domain"/>
    <property type="match status" value="1"/>
</dbReference>
<dbReference type="Gene3D" id="3.40.50.300">
    <property type="entry name" value="P-loop containing nucleotide triphosphate hydrolases"/>
    <property type="match status" value="1"/>
</dbReference>
<dbReference type="HAMAP" id="MF_01454">
    <property type="entry name" value="GTPase_Obg"/>
    <property type="match status" value="1"/>
</dbReference>
<dbReference type="InterPro" id="IPR031167">
    <property type="entry name" value="G_OBG"/>
</dbReference>
<dbReference type="InterPro" id="IPR006073">
    <property type="entry name" value="GTP-bd"/>
</dbReference>
<dbReference type="InterPro" id="IPR014100">
    <property type="entry name" value="GTP-bd_Obg/CgtA"/>
</dbReference>
<dbReference type="InterPro" id="IPR006074">
    <property type="entry name" value="GTP1-OBG_CS"/>
</dbReference>
<dbReference type="InterPro" id="IPR006169">
    <property type="entry name" value="GTP1_OBG_dom"/>
</dbReference>
<dbReference type="InterPro" id="IPR036726">
    <property type="entry name" value="GTP1_OBG_dom_sf"/>
</dbReference>
<dbReference type="InterPro" id="IPR045086">
    <property type="entry name" value="OBG_GTPase"/>
</dbReference>
<dbReference type="InterPro" id="IPR027417">
    <property type="entry name" value="P-loop_NTPase"/>
</dbReference>
<dbReference type="NCBIfam" id="TIGR02729">
    <property type="entry name" value="Obg_CgtA"/>
    <property type="match status" value="1"/>
</dbReference>
<dbReference type="NCBIfam" id="NF008955">
    <property type="entry name" value="PRK12297.1"/>
    <property type="match status" value="1"/>
</dbReference>
<dbReference type="NCBIfam" id="NF008956">
    <property type="entry name" value="PRK12299.1"/>
    <property type="match status" value="1"/>
</dbReference>
<dbReference type="PANTHER" id="PTHR11702">
    <property type="entry name" value="DEVELOPMENTALLY REGULATED GTP-BINDING PROTEIN-RELATED"/>
    <property type="match status" value="1"/>
</dbReference>
<dbReference type="PANTHER" id="PTHR11702:SF31">
    <property type="entry name" value="MITOCHONDRIAL RIBOSOME-ASSOCIATED GTPASE 2"/>
    <property type="match status" value="1"/>
</dbReference>
<dbReference type="Pfam" id="PF01018">
    <property type="entry name" value="GTP1_OBG"/>
    <property type="match status" value="1"/>
</dbReference>
<dbReference type="Pfam" id="PF01926">
    <property type="entry name" value="MMR_HSR1"/>
    <property type="match status" value="1"/>
</dbReference>
<dbReference type="PIRSF" id="PIRSF002401">
    <property type="entry name" value="GTP_bd_Obg/CgtA"/>
    <property type="match status" value="1"/>
</dbReference>
<dbReference type="PRINTS" id="PR00326">
    <property type="entry name" value="GTP1OBG"/>
</dbReference>
<dbReference type="SUPFAM" id="SSF82051">
    <property type="entry name" value="Obg GTP-binding protein N-terminal domain"/>
    <property type="match status" value="1"/>
</dbReference>
<dbReference type="SUPFAM" id="SSF52540">
    <property type="entry name" value="P-loop containing nucleoside triphosphate hydrolases"/>
    <property type="match status" value="1"/>
</dbReference>
<dbReference type="PROSITE" id="PS51710">
    <property type="entry name" value="G_OBG"/>
    <property type="match status" value="1"/>
</dbReference>
<dbReference type="PROSITE" id="PS00905">
    <property type="entry name" value="GTP1_OBG"/>
    <property type="match status" value="1"/>
</dbReference>
<dbReference type="PROSITE" id="PS51883">
    <property type="entry name" value="OBG"/>
    <property type="match status" value="1"/>
</dbReference>